<reference key="1">
    <citation type="journal article" date="2008" name="J. Bacteriol.">
        <title>Genome sequence of a nephritogenic and highly transformable M49 strain of Streptococcus pyogenes.</title>
        <authorList>
            <person name="McShan W.M."/>
            <person name="Ferretti J.J."/>
            <person name="Karasawa T."/>
            <person name="Suvorov A.N."/>
            <person name="Lin S."/>
            <person name="Qin B."/>
            <person name="Jia H."/>
            <person name="Kenton S."/>
            <person name="Najar F."/>
            <person name="Wu H."/>
            <person name="Scott J."/>
            <person name="Roe B.A."/>
            <person name="Savic D.J."/>
        </authorList>
    </citation>
    <scope>NUCLEOTIDE SEQUENCE [LARGE SCALE GENOMIC DNA]</scope>
    <source>
        <strain>NZ131</strain>
    </source>
</reference>
<protein>
    <recommendedName>
        <fullName evidence="1">Large ribosomal subunit protein uL18</fullName>
    </recommendedName>
    <alternativeName>
        <fullName evidence="3">50S ribosomal protein L18</fullName>
    </alternativeName>
</protein>
<proteinExistence type="inferred from homology"/>
<organism>
    <name type="scientific">Streptococcus pyogenes serotype M49 (strain NZ131)</name>
    <dbReference type="NCBI Taxonomy" id="471876"/>
    <lineage>
        <taxon>Bacteria</taxon>
        <taxon>Bacillati</taxon>
        <taxon>Bacillota</taxon>
        <taxon>Bacilli</taxon>
        <taxon>Lactobacillales</taxon>
        <taxon>Streptococcaceae</taxon>
        <taxon>Streptococcus</taxon>
    </lineage>
</organism>
<dbReference type="EMBL" id="CP000829">
    <property type="protein sequence ID" value="ACI60420.1"/>
    <property type="molecule type" value="Genomic_DNA"/>
</dbReference>
<dbReference type="SMR" id="B5XJ52"/>
<dbReference type="KEGG" id="soz:Spy49_0064"/>
<dbReference type="HOGENOM" id="CLU_098841_0_1_9"/>
<dbReference type="Proteomes" id="UP000001039">
    <property type="component" value="Chromosome"/>
</dbReference>
<dbReference type="GO" id="GO:0022625">
    <property type="term" value="C:cytosolic large ribosomal subunit"/>
    <property type="evidence" value="ECO:0007669"/>
    <property type="project" value="TreeGrafter"/>
</dbReference>
<dbReference type="GO" id="GO:0008097">
    <property type="term" value="F:5S rRNA binding"/>
    <property type="evidence" value="ECO:0007669"/>
    <property type="project" value="TreeGrafter"/>
</dbReference>
<dbReference type="GO" id="GO:0003735">
    <property type="term" value="F:structural constituent of ribosome"/>
    <property type="evidence" value="ECO:0007669"/>
    <property type="project" value="InterPro"/>
</dbReference>
<dbReference type="GO" id="GO:0006412">
    <property type="term" value="P:translation"/>
    <property type="evidence" value="ECO:0007669"/>
    <property type="project" value="UniProtKB-UniRule"/>
</dbReference>
<dbReference type="CDD" id="cd00432">
    <property type="entry name" value="Ribosomal_L18_L5e"/>
    <property type="match status" value="1"/>
</dbReference>
<dbReference type="FunFam" id="3.30.420.100:FF:000001">
    <property type="entry name" value="50S ribosomal protein L18"/>
    <property type="match status" value="1"/>
</dbReference>
<dbReference type="Gene3D" id="3.30.420.100">
    <property type="match status" value="1"/>
</dbReference>
<dbReference type="HAMAP" id="MF_01337_B">
    <property type="entry name" value="Ribosomal_uL18_B"/>
    <property type="match status" value="1"/>
</dbReference>
<dbReference type="InterPro" id="IPR004389">
    <property type="entry name" value="Ribosomal_uL18_bac-type"/>
</dbReference>
<dbReference type="InterPro" id="IPR005484">
    <property type="entry name" value="Ribosomal_uL18_bac/euk"/>
</dbReference>
<dbReference type="NCBIfam" id="TIGR00060">
    <property type="entry name" value="L18_bact"/>
    <property type="match status" value="1"/>
</dbReference>
<dbReference type="PANTHER" id="PTHR12899">
    <property type="entry name" value="39S RIBOSOMAL PROTEIN L18, MITOCHONDRIAL"/>
    <property type="match status" value="1"/>
</dbReference>
<dbReference type="PANTHER" id="PTHR12899:SF3">
    <property type="entry name" value="LARGE RIBOSOMAL SUBUNIT PROTEIN UL18M"/>
    <property type="match status" value="1"/>
</dbReference>
<dbReference type="Pfam" id="PF00861">
    <property type="entry name" value="Ribosomal_L18p"/>
    <property type="match status" value="1"/>
</dbReference>
<dbReference type="SUPFAM" id="SSF53137">
    <property type="entry name" value="Translational machinery components"/>
    <property type="match status" value="1"/>
</dbReference>
<feature type="chain" id="PRO_1000142726" description="Large ribosomal subunit protein uL18">
    <location>
        <begin position="1"/>
        <end position="118"/>
    </location>
</feature>
<feature type="region of interest" description="Disordered" evidence="2">
    <location>
        <begin position="1"/>
        <end position="25"/>
    </location>
</feature>
<feature type="compositionally biased region" description="Basic residues" evidence="2">
    <location>
        <begin position="10"/>
        <end position="20"/>
    </location>
</feature>
<keyword id="KW-0687">Ribonucleoprotein</keyword>
<keyword id="KW-0689">Ribosomal protein</keyword>
<keyword id="KW-0694">RNA-binding</keyword>
<keyword id="KW-0699">rRNA-binding</keyword>
<accession>B5XJ52</accession>
<evidence type="ECO:0000255" key="1">
    <source>
        <dbReference type="HAMAP-Rule" id="MF_01337"/>
    </source>
</evidence>
<evidence type="ECO:0000256" key="2">
    <source>
        <dbReference type="SAM" id="MobiDB-lite"/>
    </source>
</evidence>
<evidence type="ECO:0000305" key="3"/>
<name>RL18_STRPZ</name>
<gene>
    <name evidence="1" type="primary">rplR</name>
    <name type="ordered locus">Spy49_0064</name>
</gene>
<sequence length="118" mass="12866">MISKPDKNKIRQKRHRRVRGKLSGTADRPRLNVFRSNTGIYAQVIDDVAGVTLASASTLDKDVSKGTKTEQAVVVGKLVAERAVAKGISEVVFDRGGYLYHGRVKALADAARENGLKF</sequence>
<comment type="function">
    <text evidence="1">This is one of the proteins that bind and probably mediate the attachment of the 5S RNA into the large ribosomal subunit, where it forms part of the central protuberance.</text>
</comment>
<comment type="subunit">
    <text evidence="1">Part of the 50S ribosomal subunit; part of the 5S rRNA/L5/L18/L25 subcomplex. Contacts the 5S and 23S rRNAs.</text>
</comment>
<comment type="similarity">
    <text evidence="1">Belongs to the universal ribosomal protein uL18 family.</text>
</comment>